<dbReference type="EMBL" id="CP000854">
    <property type="protein sequence ID" value="ACC38484.1"/>
    <property type="molecule type" value="Genomic_DNA"/>
</dbReference>
<dbReference type="RefSeq" id="WP_011738418.1">
    <property type="nucleotide sequence ID" value="NC_010612.1"/>
</dbReference>
<dbReference type="SMR" id="B2HI58"/>
<dbReference type="STRING" id="216594.MMAR_0013"/>
<dbReference type="GeneID" id="34339363"/>
<dbReference type="GeneID" id="93434700"/>
<dbReference type="KEGG" id="mmi:MMAR_0013"/>
<dbReference type="eggNOG" id="ENOG5031Y35">
    <property type="taxonomic scope" value="Bacteria"/>
</dbReference>
<dbReference type="HOGENOM" id="CLU_149126_2_0_11"/>
<dbReference type="OrthoDB" id="5189646at2"/>
<dbReference type="Proteomes" id="UP000001190">
    <property type="component" value="Chromosome"/>
</dbReference>
<dbReference type="GO" id="GO:0005886">
    <property type="term" value="C:plasma membrane"/>
    <property type="evidence" value="ECO:0007669"/>
    <property type="project" value="UniProtKB-SubCell"/>
</dbReference>
<dbReference type="GO" id="GO:0051301">
    <property type="term" value="P:cell division"/>
    <property type="evidence" value="ECO:0007669"/>
    <property type="project" value="UniProtKB-UniRule"/>
</dbReference>
<dbReference type="HAMAP" id="MF_00631">
    <property type="entry name" value="CrgA"/>
    <property type="match status" value="1"/>
</dbReference>
<dbReference type="InterPro" id="IPR009619">
    <property type="entry name" value="CrgA"/>
</dbReference>
<dbReference type="NCBIfam" id="NF001194">
    <property type="entry name" value="PRK00159.1"/>
    <property type="match status" value="1"/>
</dbReference>
<dbReference type="Pfam" id="PF06781">
    <property type="entry name" value="CrgA"/>
    <property type="match status" value="1"/>
</dbReference>
<name>CRGA_MYCMM</name>
<proteinExistence type="inferred from homology"/>
<protein>
    <recommendedName>
        <fullName evidence="1">Cell division protein CrgA</fullName>
    </recommendedName>
</protein>
<accession>B2HI58</accession>
<organism>
    <name type="scientific">Mycobacterium marinum (strain ATCC BAA-535 / M)</name>
    <dbReference type="NCBI Taxonomy" id="216594"/>
    <lineage>
        <taxon>Bacteria</taxon>
        <taxon>Bacillati</taxon>
        <taxon>Actinomycetota</taxon>
        <taxon>Actinomycetes</taxon>
        <taxon>Mycobacteriales</taxon>
        <taxon>Mycobacteriaceae</taxon>
        <taxon>Mycobacterium</taxon>
        <taxon>Mycobacterium ulcerans group</taxon>
    </lineage>
</organism>
<feature type="chain" id="PRO_1000130586" description="Cell division protein CrgA">
    <location>
        <begin position="1"/>
        <end position="93"/>
    </location>
</feature>
<feature type="transmembrane region" description="Helical" evidence="1">
    <location>
        <begin position="31"/>
        <end position="51"/>
    </location>
</feature>
<feature type="transmembrane region" description="Helical" evidence="1">
    <location>
        <begin position="70"/>
        <end position="90"/>
    </location>
</feature>
<reference key="1">
    <citation type="journal article" date="2008" name="Genome Res.">
        <title>Insights from the complete genome sequence of Mycobacterium marinum on the evolution of Mycobacterium tuberculosis.</title>
        <authorList>
            <person name="Stinear T.P."/>
            <person name="Seemann T."/>
            <person name="Harrison P.F."/>
            <person name="Jenkin G.A."/>
            <person name="Davies J.K."/>
            <person name="Johnson P.D."/>
            <person name="Abdellah Z."/>
            <person name="Arrowsmith C."/>
            <person name="Chillingworth T."/>
            <person name="Churcher C."/>
            <person name="Clarke K."/>
            <person name="Cronin A."/>
            <person name="Davis P."/>
            <person name="Goodhead I."/>
            <person name="Holroyd N."/>
            <person name="Jagels K."/>
            <person name="Lord A."/>
            <person name="Moule S."/>
            <person name="Mungall K."/>
            <person name="Norbertczak H."/>
            <person name="Quail M.A."/>
            <person name="Rabbinowitsch E."/>
            <person name="Walker D."/>
            <person name="White B."/>
            <person name="Whitehead S."/>
            <person name="Small P.L."/>
            <person name="Brosch R."/>
            <person name="Ramakrishnan L."/>
            <person name="Fischbach M.A."/>
            <person name="Parkhill J."/>
            <person name="Cole S.T."/>
        </authorList>
    </citation>
    <scope>NUCLEOTIDE SEQUENCE [LARGE SCALE GENOMIC DNA]</scope>
    <source>
        <strain>ATCC BAA-535 / M</strain>
    </source>
</reference>
<keyword id="KW-0131">Cell cycle</keyword>
<keyword id="KW-0132">Cell division</keyword>
<keyword id="KW-1003">Cell membrane</keyword>
<keyword id="KW-0472">Membrane</keyword>
<keyword id="KW-1185">Reference proteome</keyword>
<keyword id="KW-0812">Transmembrane</keyword>
<keyword id="KW-1133">Transmembrane helix</keyword>
<comment type="function">
    <text evidence="1">Involved in cell division.</text>
</comment>
<comment type="subcellular location">
    <subcellularLocation>
        <location evidence="1">Cell membrane</location>
        <topology evidence="1">Multi-pass membrane protein</topology>
    </subcellularLocation>
</comment>
<comment type="similarity">
    <text evidence="1">Belongs to the CrgA family.</text>
</comment>
<sequence length="93" mass="10391">MPKSKVRKKNDFTVKPVSRTPVKVKVGPSSVWFVALFIGLMLIGLVWLMVFQLAAVGSQAPAALNWMAQLGPWNYAIAFAFMITGLLLTMRWH</sequence>
<evidence type="ECO:0000255" key="1">
    <source>
        <dbReference type="HAMAP-Rule" id="MF_00631"/>
    </source>
</evidence>
<gene>
    <name evidence="1" type="primary">crgA</name>
    <name type="ordered locus">MMAR_0013</name>
</gene>